<name>YCF2_NASOF</name>
<feature type="chain" id="PRO_0000343781" description="Protein Ycf2">
    <location>
        <begin position="1"/>
        <end position="2290"/>
    </location>
</feature>
<feature type="binding site" evidence="1">
    <location>
        <begin position="1644"/>
        <end position="1651"/>
    </location>
    <ligand>
        <name>ATP</name>
        <dbReference type="ChEBI" id="CHEBI:30616"/>
    </ligand>
</feature>
<evidence type="ECO:0000255" key="1">
    <source>
        <dbReference type="HAMAP-Rule" id="MF_01330"/>
    </source>
</evidence>
<geneLocation type="chloroplast"/>
<dbReference type="EMBL" id="AP009376">
    <property type="protein sequence ID" value="BAF50681.1"/>
    <property type="molecule type" value="Genomic_DNA"/>
</dbReference>
<dbReference type="EMBL" id="AP009376">
    <property type="protein sequence ID" value="BAF50702.1"/>
    <property type="molecule type" value="Genomic_DNA"/>
</dbReference>
<dbReference type="GO" id="GO:0009570">
    <property type="term" value="C:chloroplast stroma"/>
    <property type="evidence" value="ECO:0007669"/>
    <property type="project" value="UniProtKB-SubCell"/>
</dbReference>
<dbReference type="GO" id="GO:0005524">
    <property type="term" value="F:ATP binding"/>
    <property type="evidence" value="ECO:0007669"/>
    <property type="project" value="UniProtKB-KW"/>
</dbReference>
<dbReference type="GO" id="GO:0016887">
    <property type="term" value="F:ATP hydrolysis activity"/>
    <property type="evidence" value="ECO:0007669"/>
    <property type="project" value="InterPro"/>
</dbReference>
<dbReference type="CDD" id="cd19505">
    <property type="entry name" value="RecA-like_Ycf2"/>
    <property type="match status" value="1"/>
</dbReference>
<dbReference type="Gene3D" id="3.40.50.300">
    <property type="entry name" value="P-loop containing nucleotide triphosphate hydrolases"/>
    <property type="match status" value="1"/>
</dbReference>
<dbReference type="HAMAP" id="MF_01330">
    <property type="entry name" value="Ycf2"/>
    <property type="match status" value="1"/>
</dbReference>
<dbReference type="InterPro" id="IPR003593">
    <property type="entry name" value="AAA+_ATPase"/>
</dbReference>
<dbReference type="InterPro" id="IPR003959">
    <property type="entry name" value="ATPase_AAA_core"/>
</dbReference>
<dbReference type="InterPro" id="IPR027417">
    <property type="entry name" value="P-loop_NTPase"/>
</dbReference>
<dbReference type="InterPro" id="IPR008543">
    <property type="entry name" value="Uncharacterised_Ycf2"/>
</dbReference>
<dbReference type="InterPro" id="IPR056777">
    <property type="entry name" value="Ycf2_N"/>
</dbReference>
<dbReference type="PANTHER" id="PTHR33078:SF89">
    <property type="entry name" value="PROTEIN YCF2"/>
    <property type="match status" value="1"/>
</dbReference>
<dbReference type="PANTHER" id="PTHR33078">
    <property type="entry name" value="PROTEIN YCF2-RELATED"/>
    <property type="match status" value="1"/>
</dbReference>
<dbReference type="Pfam" id="PF00004">
    <property type="entry name" value="AAA"/>
    <property type="match status" value="1"/>
</dbReference>
<dbReference type="Pfam" id="PF05695">
    <property type="entry name" value="Ycf2"/>
    <property type="match status" value="1"/>
</dbReference>
<dbReference type="SMART" id="SM00382">
    <property type="entry name" value="AAA"/>
    <property type="match status" value="1"/>
</dbReference>
<dbReference type="SUPFAM" id="SSF52540">
    <property type="entry name" value="P-loop containing nucleoside triphosphate hydrolases"/>
    <property type="match status" value="1"/>
</dbReference>
<accession>A4QLX6</accession>
<protein>
    <recommendedName>
        <fullName evidence="1">Protein Ycf2</fullName>
    </recommendedName>
</protein>
<organism>
    <name type="scientific">Nasturtium officinale</name>
    <name type="common">Watercress</name>
    <name type="synonym">Rorippa nasturtium-aquaticum</name>
    <dbReference type="NCBI Taxonomy" id="65948"/>
    <lineage>
        <taxon>Eukaryota</taxon>
        <taxon>Viridiplantae</taxon>
        <taxon>Streptophyta</taxon>
        <taxon>Embryophyta</taxon>
        <taxon>Tracheophyta</taxon>
        <taxon>Spermatophyta</taxon>
        <taxon>Magnoliopsida</taxon>
        <taxon>eudicotyledons</taxon>
        <taxon>Gunneridae</taxon>
        <taxon>Pentapetalae</taxon>
        <taxon>rosids</taxon>
        <taxon>malvids</taxon>
        <taxon>Brassicales</taxon>
        <taxon>Brassicaceae</taxon>
        <taxon>Cardamineae</taxon>
        <taxon>Nasturtium</taxon>
    </lineage>
</organism>
<comment type="function">
    <text evidence="1">Probable ATPase of unknown function. Its presence in a non-photosynthetic plant (Epifagus virginiana) and experiments in tobacco indicate that it has an essential function which is probably not related to photosynthesis.</text>
</comment>
<comment type="subcellular location">
    <subcellularLocation>
        <location evidence="1">Plastid</location>
        <location evidence="1">Chloroplast stroma</location>
    </subcellularLocation>
</comment>
<comment type="similarity">
    <text evidence="1">Belongs to the Ycf2 family.</text>
</comment>
<sequence length="2290" mass="269020">MKGHQFKSWIFELREIVREIKNSHYFLDSWTQFNSVGSFIHIFFHQERFRKLLDPRIFSILLLRNSQGSTSNRYFTIKGVVLFVVAALLYRINNRNLVESKNLYLKGLLPIPMNSIGPRNDTSEESFGSSNINRLIVSLLYLTKGKKISESCFRDPKESTWVLPITKKCIMPESNWSSRWWRNWIGKKRDFCCKISNETVAGIDISFKEKDIKYLEFLFVYYMDDPIRKGHDWELFNRLSPSKRRNIINLNSGQLFEILVKDWICYLMFAFREKIPLEVEGFFKQQGAGSTIQSNDIEHVSHLFSRNKWAISLQNCAQFHMWQFHQDLFVSWGKNPHESDFLRKISRENWIWLDNVWLVNKDRFFSKVRNVSSNIQYDSTRSSFVQVTDSSQLNGSSDQFIDPFDSISNEDSEYHYHTLINQREIQQLKERSILWDPSFIQTEGREIESDRFPKYLSGYSSMPRLFTEREKRMNNHLLPEESEEFLGNSTRAIRSFFSDRWSELHLGSNPTERSTRDQKLLKKEQDVSFVPSRRSENQEIVNIFKIITYLQNTVSIHPISSDLGCDMVPKDELDMDSSNKISFLNKNPFFDLFHLFHERKRGGYTLRHDFESEERFQEMADLFTLSITEPDLVYHKGFAFSIDSYGLDQRQFLKEGFNSRDESKKKSLLVLPPIFSEENESFYRRIRKNWVRISCGNYLEDPKRVVFASNNIMEAVNQYRLIRNLIQIQFQYSPYGYIRNVLNRFFLMKRPDRNFEYGIQRDLIGNDTLNHRTIMKDTINQHLSNLKKSQKKWFDPLIFLSRTERSINRDPNAYRYKWSNGSKNFQEHLEHFVSERKSRFQVVFDRLCINQYSIDWSEVIDKKDLSKSLRFFLSKLLRFFLSKLLLFLSKLLLFLSNSLPFFFVSFENIPIHRSEIHIYELKGPNDQLCNQLLESIGLQIVHLKKLKPFLLDDHNTSQKSKFLINGGTISPFLFNKIPKWMIDSFHTRKNRRKSFDNTDSYFSIVSHDQDNWLNPVKPFQRSSLISSFSKANRLRFLNNPHHFCFYCNKRFPFYVEKARLNNSDFTYGQFLTILFLHNKIFSSCGGKKKHAFLERDTISPSSIESQVSNIFISNDFPQSGDERYNLYKSFHFPIRSDPLVRRAIYSIAAISGTPLIEGQRVNFERTYCQTLSDMNLSDSEEKSLHQYLNFNSNMGLIHTPCSEKYLQRKKRSLCLKKCVDKGQMDRTFQRDSAFSTLSKLNLFQTYMPWFFTSTGYKYLNLIFLDTFSDLLRILSSSQKFVSIFHDIMHGLDISWRILQKKLCLPQRNLISEISSKSLHNILLSEEMIHRNNESSLISTHLRSPNVREVLYSILFLLLVAGYIVRTHLLFVSRAYSELQTEFEKIKSLMIPSYMIELRKLLDRYPTSELNSFWLKNLFLVSLEQLGDCLEEIRGSGGNILRGGDPAYGVKSIRSKKKDLKINFIDIISIIPNPINQITFSRNTRHLSHTSKEIYSVIRKRKNVSGDWIDDKIESWVANSDSIDDKEREFLVQFSTLRAEKRIDQILLSLTHSDHLSKNDSGYQMIEQPGTIYLRYLVDIHKKYLMNYEFNTSCLAERRIFLAHYQTITYSQTSCGANSFHFPSHGKPFSLRLALSPSRSILVIGSIGTGRSYLVKYLATNSYVPFITVFLNKFLDNKPKGFFIDDIDIDDSDDIDASNDIDRELDTELELLTMMNALTMDMMSEIDLFYITLQFELAKAMSPCIIWIPNIHDLDVNESNYLALGLLVNSLSRDCERCSTRNILVIASTHIPQKVDPALIAPNKLNTCIKIRRLLIPQQRKHFFTLSYTRGFHLEKKMFHTNGFESITMGSSARDLVALTNEALSISITQKKSIIDTNTIRSALHRQTWDLRSQVRSVQDHGILFYQIGRAVAQNVLISNCPIDPISIYRKKKSCNEGDSYLYKWYFELRTSMKKFTILLYLLSCSAGSVAQDLWSLPGPDEKNRITSYGFIENDSDLVHGLLEVQGALVGSSRTEKDCSQFDNDRVTLLFRSEPRDPLYMMQDGSCSIVDQRFLYEKYESEFEEGEGEGVLDPQQIEEDLFNHIVWAPRIWRPRGFLFDCIERPNELGFPYLAGSFRGKRIIYDEKYELQENDSEFLQSGTMQYQRRDRSSKEQGFFRISQFIWDPADPLFFLFKDQPFVSVFSHREFFADEEMSKGLLTSQTDPPTSIYKRWFIKNTQEKHFELLIQRQRWLRTNSSLSNGFFRSNTRSESYQYLSNLFLSNGTLLDRMTKTLLKKRWLFPDEMKIGFM</sequence>
<keyword id="KW-0067">ATP-binding</keyword>
<keyword id="KW-0150">Chloroplast</keyword>
<keyword id="KW-0547">Nucleotide-binding</keyword>
<keyword id="KW-0934">Plastid</keyword>
<reference key="1">
    <citation type="submission" date="2007-03" db="EMBL/GenBank/DDBJ databases">
        <title>Sequencing analysis of Nasturtium officinale chloroplast DNA.</title>
        <authorList>
            <person name="Hosouchi T."/>
            <person name="Tsuruoka H."/>
            <person name="Kotani H."/>
        </authorList>
    </citation>
    <scope>NUCLEOTIDE SEQUENCE [LARGE SCALE GENOMIC DNA]</scope>
</reference>
<proteinExistence type="inferred from homology"/>
<gene>
    <name evidence="1" type="primary">ycf2-A</name>
</gene>
<gene>
    <name evidence="1" type="primary">ycf2-B</name>
</gene>